<dbReference type="EMBL" id="AL123456">
    <property type="protein sequence ID" value="CCP45559.1"/>
    <property type="molecule type" value="Genomic_DNA"/>
</dbReference>
<dbReference type="PIR" id="G70880">
    <property type="entry name" value="G70880"/>
</dbReference>
<dbReference type="RefSeq" id="NP_217276.1">
    <property type="nucleotide sequence ID" value="NC_000962.3"/>
</dbReference>
<dbReference type="RefSeq" id="WP_003414066.1">
    <property type="nucleotide sequence ID" value="NZ_NVQJ01000020.1"/>
</dbReference>
<dbReference type="SMR" id="P9WJ19"/>
<dbReference type="STRING" id="83332.Rv2760c"/>
<dbReference type="PaxDb" id="83332-Rv2760c"/>
<dbReference type="DNASU" id="887705"/>
<dbReference type="GeneID" id="887705"/>
<dbReference type="KEGG" id="mtu:Rv2760c"/>
<dbReference type="KEGG" id="mtv:RVBD_2760c"/>
<dbReference type="TubercuList" id="Rv2760c"/>
<dbReference type="eggNOG" id="COG4423">
    <property type="taxonomic scope" value="Bacteria"/>
</dbReference>
<dbReference type="InParanoid" id="P9WJ19"/>
<dbReference type="OrthoDB" id="560250at2"/>
<dbReference type="Proteomes" id="UP000001584">
    <property type="component" value="Chromosome"/>
</dbReference>
<dbReference type="InterPro" id="IPR011660">
    <property type="entry name" value="VapB-like"/>
</dbReference>
<dbReference type="Pfam" id="PF07704">
    <property type="entry name" value="PSK_trans_fac"/>
    <property type="match status" value="1"/>
</dbReference>
<reference key="1">
    <citation type="journal article" date="1998" name="Nature">
        <title>Deciphering the biology of Mycobacterium tuberculosis from the complete genome sequence.</title>
        <authorList>
            <person name="Cole S.T."/>
            <person name="Brosch R."/>
            <person name="Parkhill J."/>
            <person name="Garnier T."/>
            <person name="Churcher C.M."/>
            <person name="Harris D.E."/>
            <person name="Gordon S.V."/>
            <person name="Eiglmeier K."/>
            <person name="Gas S."/>
            <person name="Barry C.E. III"/>
            <person name="Tekaia F."/>
            <person name="Badcock K."/>
            <person name="Basham D."/>
            <person name="Brown D."/>
            <person name="Chillingworth T."/>
            <person name="Connor R."/>
            <person name="Davies R.M."/>
            <person name="Devlin K."/>
            <person name="Feltwell T."/>
            <person name="Gentles S."/>
            <person name="Hamlin N."/>
            <person name="Holroyd S."/>
            <person name="Hornsby T."/>
            <person name="Jagels K."/>
            <person name="Krogh A."/>
            <person name="McLean J."/>
            <person name="Moule S."/>
            <person name="Murphy L.D."/>
            <person name="Oliver S."/>
            <person name="Osborne J."/>
            <person name="Quail M.A."/>
            <person name="Rajandream M.A."/>
            <person name="Rogers J."/>
            <person name="Rutter S."/>
            <person name="Seeger K."/>
            <person name="Skelton S."/>
            <person name="Squares S."/>
            <person name="Squares R."/>
            <person name="Sulston J.E."/>
            <person name="Taylor K."/>
            <person name="Whitehead S."/>
            <person name="Barrell B.G."/>
        </authorList>
    </citation>
    <scope>NUCLEOTIDE SEQUENCE [LARGE SCALE GENOMIC DNA]</scope>
    <source>
        <strain>ATCC 25618 / H37Rv</strain>
    </source>
</reference>
<reference key="2">
    <citation type="journal article" date="2009" name="PLoS Genet.">
        <title>Comprehensive functional analysis of Mycobacterium tuberculosis toxin-antitoxin systems: implications for pathogenesis, stress responses, and evolution.</title>
        <authorList>
            <person name="Ramage H.R."/>
            <person name="Connolly L.E."/>
            <person name="Cox J.S."/>
        </authorList>
    </citation>
    <scope>POSSIBLE FUNCTION</scope>
    <source>
        <strain>ATCC 35801 / TMC 107 / Erdman</strain>
    </source>
</reference>
<accession>P9WJ19</accession>
<accession>L0TC64</accession>
<accession>O33302</accession>
<accession>Q7D6M7</accession>
<proteinExistence type="predicted"/>
<evidence type="ECO:0000305" key="1">
    <source>
    </source>
</evidence>
<feature type="chain" id="PRO_0000408083" description="Putative antitoxin VapB42">
    <location>
        <begin position="1"/>
        <end position="89"/>
    </location>
</feature>
<comment type="function">
    <text evidence="1">Possibly the antitoxin component of a type II toxin-antitoxin (TA) system. Its cognate toxin is VapC42.</text>
</comment>
<protein>
    <recommendedName>
        <fullName>Putative antitoxin VapB42</fullName>
    </recommendedName>
</protein>
<organism>
    <name type="scientific">Mycobacterium tuberculosis (strain ATCC 25618 / H37Rv)</name>
    <dbReference type="NCBI Taxonomy" id="83332"/>
    <lineage>
        <taxon>Bacteria</taxon>
        <taxon>Bacillati</taxon>
        <taxon>Actinomycetota</taxon>
        <taxon>Actinomycetes</taxon>
        <taxon>Mycobacteriales</taxon>
        <taxon>Mycobacteriaceae</taxon>
        <taxon>Mycobacterium</taxon>
        <taxon>Mycobacterium tuberculosis complex</taxon>
    </lineage>
</organism>
<keyword id="KW-1185">Reference proteome</keyword>
<keyword id="KW-1277">Toxin-antitoxin system</keyword>
<sequence length="89" mass="10115">MSLNIKSQRTVALVRELAARTGTNQTAAVEDAVARRLSELDREDRARAEARRAAAEQTLRDLDKLLSDDDKRLIRRHEVDLYDDSGLPR</sequence>
<gene>
    <name type="primary">vapB42</name>
    <name type="ordered locus">Rv2760c</name>
</gene>
<name>VPB42_MYCTU</name>